<keyword id="KW-0030">Aminoacyl-tRNA synthetase</keyword>
<keyword id="KW-0067">ATP-binding</keyword>
<keyword id="KW-0963">Cytoplasm</keyword>
<keyword id="KW-0436">Ligase</keyword>
<keyword id="KW-0547">Nucleotide-binding</keyword>
<keyword id="KW-0648">Protein biosynthesis</keyword>
<keyword id="KW-0694">RNA-binding</keyword>
<comment type="function">
    <text evidence="1">Catalyzes the attachment of tyrosine to tRNA(Tyr) in a two-step reaction: tyrosine is first activated by ATP to form Tyr-AMP and then transferred to the acceptor end of tRNA(Tyr).</text>
</comment>
<comment type="catalytic activity">
    <reaction evidence="1">
        <text>tRNA(Tyr) + L-tyrosine + ATP = L-tyrosyl-tRNA(Tyr) + AMP + diphosphate + H(+)</text>
        <dbReference type="Rhea" id="RHEA:10220"/>
        <dbReference type="Rhea" id="RHEA-COMP:9706"/>
        <dbReference type="Rhea" id="RHEA-COMP:9707"/>
        <dbReference type="ChEBI" id="CHEBI:15378"/>
        <dbReference type="ChEBI" id="CHEBI:30616"/>
        <dbReference type="ChEBI" id="CHEBI:33019"/>
        <dbReference type="ChEBI" id="CHEBI:58315"/>
        <dbReference type="ChEBI" id="CHEBI:78442"/>
        <dbReference type="ChEBI" id="CHEBI:78536"/>
        <dbReference type="ChEBI" id="CHEBI:456215"/>
        <dbReference type="EC" id="6.1.1.1"/>
    </reaction>
</comment>
<comment type="subunit">
    <text evidence="1">Homodimer.</text>
</comment>
<comment type="subcellular location">
    <subcellularLocation>
        <location evidence="1">Cytoplasm</location>
    </subcellularLocation>
</comment>
<comment type="similarity">
    <text evidence="1">Belongs to the class-I aminoacyl-tRNA synthetase family. TyrS type 1 subfamily.</text>
</comment>
<reference key="1">
    <citation type="journal article" date="2003" name="Genome Res.">
        <title>Genome sequence of an M3 strain of Streptococcus pyogenes reveals a large-scale genomic rearrangement in invasive strains and new insights into phage evolution.</title>
        <authorList>
            <person name="Nakagawa I."/>
            <person name="Kurokawa K."/>
            <person name="Yamashita A."/>
            <person name="Nakata M."/>
            <person name="Tomiyasu Y."/>
            <person name="Okahashi N."/>
            <person name="Kawabata S."/>
            <person name="Yamazaki K."/>
            <person name="Shiba T."/>
            <person name="Yasunaga T."/>
            <person name="Hayashi H."/>
            <person name="Hattori M."/>
            <person name="Hamada S."/>
        </authorList>
    </citation>
    <scope>NUCLEOTIDE SEQUENCE [LARGE SCALE GENOMIC DNA]</scope>
    <source>
        <strain>SSI-1</strain>
    </source>
</reference>
<sequence length="418" mass="47269">MNIFEELKARGLVFQTTDEQALVKALTEGQVSYYTGYDPTADSLHLGHLVAILTSRRLQLAGHKPYALVGGATGLIGDPSFKDAERSLQTKETVLEWSDKIKGQLSTFLDFENGDNKAELVNNYDWFSQISFIDFLRDVGKYFTVNYMMSKDSVKKRIETGISYTEFAYQIMQGYDFYELNDKHNVTLQIGGSDQWGNMTAGTELLRKKADKTGHVMTVPLITDSTGKKFGKSEGNAVWLDADKTSPYEMYQFWLNVMDDDAVRFLKIFTFLSLDEIAEIESQFNAARHERLAQKTLAREVVTLVHGEEAYKQALNITEQLFAGNIKNLSANELKQGLSNVPNYHVQSEDSLNLVDMLVTAGISPSKRQAREDVQNGAIYINGDRIQDLDYQLSNDDKIDDQLTVIRRGKKKYAVLTY</sequence>
<proteinExistence type="inferred from homology"/>
<feature type="chain" id="PRO_0000411621" description="Tyrosine--tRNA ligase">
    <location>
        <begin position="1"/>
        <end position="418"/>
    </location>
</feature>
<feature type="domain" description="S4 RNA-binding" evidence="1">
    <location>
        <begin position="352"/>
        <end position="418"/>
    </location>
</feature>
<feature type="short sequence motif" description="'HIGH' region">
    <location>
        <begin position="39"/>
        <end position="48"/>
    </location>
</feature>
<feature type="short sequence motif" description="'KMSKS' region">
    <location>
        <begin position="229"/>
        <end position="233"/>
    </location>
</feature>
<feature type="binding site" evidence="1">
    <location>
        <position position="34"/>
    </location>
    <ligand>
        <name>L-tyrosine</name>
        <dbReference type="ChEBI" id="CHEBI:58315"/>
    </ligand>
</feature>
<feature type="binding site" evidence="1">
    <location>
        <position position="169"/>
    </location>
    <ligand>
        <name>L-tyrosine</name>
        <dbReference type="ChEBI" id="CHEBI:58315"/>
    </ligand>
</feature>
<feature type="binding site" evidence="1">
    <location>
        <position position="173"/>
    </location>
    <ligand>
        <name>L-tyrosine</name>
        <dbReference type="ChEBI" id="CHEBI:58315"/>
    </ligand>
</feature>
<feature type="binding site" evidence="1">
    <location>
        <position position="232"/>
    </location>
    <ligand>
        <name>ATP</name>
        <dbReference type="ChEBI" id="CHEBI:30616"/>
    </ligand>
</feature>
<accession>P0DG63</accession>
<accession>Q79YQ7</accession>
<accession>Q8K8W5</accession>
<protein>
    <recommendedName>
        <fullName evidence="1">Tyrosine--tRNA ligase</fullName>
        <ecNumber evidence="1">6.1.1.1</ecNumber>
    </recommendedName>
    <alternativeName>
        <fullName evidence="1">Tyrosyl-tRNA synthetase</fullName>
        <shortName evidence="1">TyrRS</shortName>
    </alternativeName>
</protein>
<organism>
    <name type="scientific">Streptococcus pyogenes serotype M3 (strain SSI-1)</name>
    <dbReference type="NCBI Taxonomy" id="193567"/>
    <lineage>
        <taxon>Bacteria</taxon>
        <taxon>Bacillati</taxon>
        <taxon>Bacillota</taxon>
        <taxon>Bacilli</taxon>
        <taxon>Lactobacillales</taxon>
        <taxon>Streptococcaceae</taxon>
        <taxon>Streptococcus</taxon>
    </lineage>
</organism>
<name>SYY_STRPQ</name>
<gene>
    <name evidence="1" type="primary">tyrS</name>
    <name type="ordered locus">SPs0074</name>
</gene>
<evidence type="ECO:0000255" key="1">
    <source>
        <dbReference type="HAMAP-Rule" id="MF_02006"/>
    </source>
</evidence>
<dbReference type="EC" id="6.1.1.1" evidence="1"/>
<dbReference type="EMBL" id="BA000034">
    <property type="protein sequence ID" value="BAC63169.1"/>
    <property type="molecule type" value="Genomic_DNA"/>
</dbReference>
<dbReference type="RefSeq" id="WP_011054110.1">
    <property type="nucleotide sequence ID" value="NC_004606.1"/>
</dbReference>
<dbReference type="SMR" id="P0DG63"/>
<dbReference type="KEGG" id="sps:SPs0074"/>
<dbReference type="HOGENOM" id="CLU_024003_0_3_9"/>
<dbReference type="GO" id="GO:0005829">
    <property type="term" value="C:cytosol"/>
    <property type="evidence" value="ECO:0007669"/>
    <property type="project" value="TreeGrafter"/>
</dbReference>
<dbReference type="GO" id="GO:0005524">
    <property type="term" value="F:ATP binding"/>
    <property type="evidence" value="ECO:0007669"/>
    <property type="project" value="UniProtKB-UniRule"/>
</dbReference>
<dbReference type="GO" id="GO:0003723">
    <property type="term" value="F:RNA binding"/>
    <property type="evidence" value="ECO:0007669"/>
    <property type="project" value="UniProtKB-KW"/>
</dbReference>
<dbReference type="GO" id="GO:0004831">
    <property type="term" value="F:tyrosine-tRNA ligase activity"/>
    <property type="evidence" value="ECO:0007669"/>
    <property type="project" value="UniProtKB-UniRule"/>
</dbReference>
<dbReference type="GO" id="GO:0006437">
    <property type="term" value="P:tyrosyl-tRNA aminoacylation"/>
    <property type="evidence" value="ECO:0007669"/>
    <property type="project" value="UniProtKB-UniRule"/>
</dbReference>
<dbReference type="CDD" id="cd00165">
    <property type="entry name" value="S4"/>
    <property type="match status" value="1"/>
</dbReference>
<dbReference type="CDD" id="cd00805">
    <property type="entry name" value="TyrRS_core"/>
    <property type="match status" value="1"/>
</dbReference>
<dbReference type="FunFam" id="1.10.240.10:FF:000001">
    <property type="entry name" value="Tyrosine--tRNA ligase"/>
    <property type="match status" value="1"/>
</dbReference>
<dbReference type="FunFam" id="3.40.50.620:FF:000008">
    <property type="entry name" value="Tyrosine--tRNA ligase"/>
    <property type="match status" value="1"/>
</dbReference>
<dbReference type="Gene3D" id="3.40.50.620">
    <property type="entry name" value="HUPs"/>
    <property type="match status" value="1"/>
</dbReference>
<dbReference type="Gene3D" id="3.10.290.10">
    <property type="entry name" value="RNA-binding S4 domain"/>
    <property type="match status" value="1"/>
</dbReference>
<dbReference type="Gene3D" id="1.10.240.10">
    <property type="entry name" value="Tyrosyl-Transfer RNA Synthetase"/>
    <property type="match status" value="1"/>
</dbReference>
<dbReference type="HAMAP" id="MF_02006">
    <property type="entry name" value="Tyr_tRNA_synth_type1"/>
    <property type="match status" value="1"/>
</dbReference>
<dbReference type="InterPro" id="IPR001412">
    <property type="entry name" value="aa-tRNA-synth_I_CS"/>
</dbReference>
<dbReference type="InterPro" id="IPR002305">
    <property type="entry name" value="aa-tRNA-synth_Ic"/>
</dbReference>
<dbReference type="InterPro" id="IPR014729">
    <property type="entry name" value="Rossmann-like_a/b/a_fold"/>
</dbReference>
<dbReference type="InterPro" id="IPR002942">
    <property type="entry name" value="S4_RNA-bd"/>
</dbReference>
<dbReference type="InterPro" id="IPR036986">
    <property type="entry name" value="S4_RNA-bd_sf"/>
</dbReference>
<dbReference type="InterPro" id="IPR054608">
    <property type="entry name" value="SYY-like_C"/>
</dbReference>
<dbReference type="InterPro" id="IPR002307">
    <property type="entry name" value="Tyr-tRNA-ligase"/>
</dbReference>
<dbReference type="InterPro" id="IPR024088">
    <property type="entry name" value="Tyr-tRNA-ligase_bac-type"/>
</dbReference>
<dbReference type="InterPro" id="IPR024107">
    <property type="entry name" value="Tyr-tRNA-ligase_bac_1"/>
</dbReference>
<dbReference type="NCBIfam" id="TIGR00234">
    <property type="entry name" value="tyrS"/>
    <property type="match status" value="1"/>
</dbReference>
<dbReference type="PANTHER" id="PTHR11766:SF0">
    <property type="entry name" value="TYROSINE--TRNA LIGASE, MITOCHONDRIAL"/>
    <property type="match status" value="1"/>
</dbReference>
<dbReference type="PANTHER" id="PTHR11766">
    <property type="entry name" value="TYROSYL-TRNA SYNTHETASE"/>
    <property type="match status" value="1"/>
</dbReference>
<dbReference type="Pfam" id="PF22421">
    <property type="entry name" value="SYY_C-terminal"/>
    <property type="match status" value="1"/>
</dbReference>
<dbReference type="Pfam" id="PF00579">
    <property type="entry name" value="tRNA-synt_1b"/>
    <property type="match status" value="1"/>
</dbReference>
<dbReference type="PRINTS" id="PR01040">
    <property type="entry name" value="TRNASYNTHTYR"/>
</dbReference>
<dbReference type="SMART" id="SM00363">
    <property type="entry name" value="S4"/>
    <property type="match status" value="1"/>
</dbReference>
<dbReference type="SUPFAM" id="SSF55174">
    <property type="entry name" value="Alpha-L RNA-binding motif"/>
    <property type="match status" value="1"/>
</dbReference>
<dbReference type="SUPFAM" id="SSF52374">
    <property type="entry name" value="Nucleotidylyl transferase"/>
    <property type="match status" value="1"/>
</dbReference>
<dbReference type="PROSITE" id="PS00178">
    <property type="entry name" value="AA_TRNA_LIGASE_I"/>
    <property type="match status" value="1"/>
</dbReference>
<dbReference type="PROSITE" id="PS50889">
    <property type="entry name" value="S4"/>
    <property type="match status" value="1"/>
</dbReference>